<organism>
    <name type="scientific">Mycobacterium tuberculosis (strain ATCC 25618 / H37Rv)</name>
    <dbReference type="NCBI Taxonomy" id="83332"/>
    <lineage>
        <taxon>Bacteria</taxon>
        <taxon>Bacillati</taxon>
        <taxon>Actinomycetota</taxon>
        <taxon>Actinomycetes</taxon>
        <taxon>Mycobacteriales</taxon>
        <taxon>Mycobacteriaceae</taxon>
        <taxon>Mycobacterium</taxon>
        <taxon>Mycobacterium tuberculosis complex</taxon>
    </lineage>
</organism>
<proteinExistence type="evidence at protein level"/>
<keyword id="KW-1185">Reference proteome</keyword>
<keyword id="KW-0732">Signal</keyword>
<dbReference type="EMBL" id="AL123456">
    <property type="protein sequence ID" value="CCP42965.1"/>
    <property type="molecule type" value="Genomic_DNA"/>
</dbReference>
<dbReference type="RefSeq" id="WP_003401289.1">
    <property type="nucleotide sequence ID" value="NZ_NVQJ01000001.1"/>
</dbReference>
<dbReference type="RefSeq" id="YP_177619.1">
    <property type="nucleotide sequence ID" value="NC_000962.3"/>
</dbReference>
<dbReference type="SMR" id="P9WLB1"/>
<dbReference type="STRING" id="83332.Rv0236A"/>
<dbReference type="PaxDb" id="83332-Rv0236A"/>
<dbReference type="GeneID" id="3205106"/>
<dbReference type="KEGG" id="mtu:Rv0236A"/>
<dbReference type="KEGG" id="mtv:RVBD_0236A"/>
<dbReference type="TubercuList" id="Rv0236A"/>
<dbReference type="eggNOG" id="ENOG5030NJN">
    <property type="taxonomic scope" value="Bacteria"/>
</dbReference>
<dbReference type="InParanoid" id="P9WLB1"/>
<dbReference type="OrthoDB" id="4630181at2"/>
<dbReference type="Proteomes" id="UP000001584">
    <property type="component" value="Chromosome"/>
</dbReference>
<dbReference type="InterPro" id="IPR022566">
    <property type="entry name" value="DUF2613"/>
</dbReference>
<dbReference type="Pfam" id="PF11021">
    <property type="entry name" value="DUF2613"/>
    <property type="match status" value="1"/>
</dbReference>
<evidence type="ECO:0000255" key="1"/>
<evidence type="ECO:0000256" key="2">
    <source>
        <dbReference type="SAM" id="MobiDB-lite"/>
    </source>
</evidence>
<evidence type="ECO:0000312" key="3">
    <source>
        <dbReference type="EMBL" id="CCP42965.1"/>
    </source>
</evidence>
<protein>
    <recommendedName>
        <fullName>Putative secreted protein Rv0236A</fullName>
    </recommendedName>
</protein>
<name>Y236A_MYCTU</name>
<feature type="signal peptide" evidence="1">
    <location>
        <begin position="1"/>
        <end position="32"/>
    </location>
</feature>
<feature type="chain" id="PRO_0000014068" description="Putative secreted protein Rv0236A">
    <location>
        <begin position="33"/>
        <end position="57"/>
    </location>
</feature>
<feature type="region of interest" description="Disordered" evidence="2">
    <location>
        <begin position="34"/>
        <end position="57"/>
    </location>
</feature>
<reference key="1">
    <citation type="journal article" date="1998" name="Nature">
        <title>Deciphering the biology of Mycobacterium tuberculosis from the complete genome sequence.</title>
        <authorList>
            <person name="Cole S.T."/>
            <person name="Brosch R."/>
            <person name="Parkhill J."/>
            <person name="Garnier T."/>
            <person name="Churcher C.M."/>
            <person name="Harris D.E."/>
            <person name="Gordon S.V."/>
            <person name="Eiglmeier K."/>
            <person name="Gas S."/>
            <person name="Barry C.E. III"/>
            <person name="Tekaia F."/>
            <person name="Badcock K."/>
            <person name="Basham D."/>
            <person name="Brown D."/>
            <person name="Chillingworth T."/>
            <person name="Connor R."/>
            <person name="Davies R.M."/>
            <person name="Devlin K."/>
            <person name="Feltwell T."/>
            <person name="Gentles S."/>
            <person name="Hamlin N."/>
            <person name="Holroyd S."/>
            <person name="Hornsby T."/>
            <person name="Jagels K."/>
            <person name="Krogh A."/>
            <person name="McLean J."/>
            <person name="Moule S."/>
            <person name="Murphy L.D."/>
            <person name="Oliver S."/>
            <person name="Osborne J."/>
            <person name="Quail M.A."/>
            <person name="Rajandream M.A."/>
            <person name="Rogers J."/>
            <person name="Rutter S."/>
            <person name="Seeger K."/>
            <person name="Skelton S."/>
            <person name="Squares S."/>
            <person name="Squares R."/>
            <person name="Sulston J.E."/>
            <person name="Taylor K."/>
            <person name="Whitehead S."/>
            <person name="Barrell B.G."/>
        </authorList>
    </citation>
    <scope>NUCLEOTIDE SEQUENCE [LARGE SCALE GENOMIC DNA]</scope>
    <source>
        <strain>ATCC 25618 / H37Rv</strain>
    </source>
</reference>
<reference key="2">
    <citation type="journal article" date="2002" name="Microbiology">
        <title>Re-annotation of the genome sequence of Mycobacterium tuberculosis H37Rv.</title>
        <authorList>
            <person name="Camus J.-C."/>
            <person name="Pryor M.J."/>
            <person name="Medigue C."/>
            <person name="Cole S.T."/>
        </authorList>
    </citation>
    <scope>IDENTIFICATION</scope>
    <source>
        <strain>ATCC 25618 / H37Rv</strain>
    </source>
</reference>
<reference key="3">
    <citation type="journal article" date="2011" name="Mol. Cell. Proteomics">
        <title>Proteogenomic analysis of Mycobacterium tuberculosis by high resolution mass spectrometry.</title>
        <authorList>
            <person name="Kelkar D.S."/>
            <person name="Kumar D."/>
            <person name="Kumar P."/>
            <person name="Balakrishnan L."/>
            <person name="Muthusamy B."/>
            <person name="Yadav A.K."/>
            <person name="Shrivastava P."/>
            <person name="Marimuthu A."/>
            <person name="Anand S."/>
            <person name="Sundaram H."/>
            <person name="Kingsbury R."/>
            <person name="Harsha H.C."/>
            <person name="Nair B."/>
            <person name="Prasad T.S."/>
            <person name="Chauhan D.S."/>
            <person name="Katoch K."/>
            <person name="Katoch V.M."/>
            <person name="Kumar P."/>
            <person name="Chaerkady R."/>
            <person name="Ramachandran S."/>
            <person name="Dash D."/>
            <person name="Pandey A."/>
        </authorList>
    </citation>
    <scope>IDENTIFICATION BY MASS SPECTROMETRY [LARGE SCALE ANALYSIS]</scope>
    <source>
        <strain>ATCC 25618 / H37Rv</strain>
    </source>
</reference>
<accession>P9WLB1</accession>
<accession>L0T324</accession>
<accession>P0A5C5</accession>
<accession>P58240</accession>
<gene>
    <name evidence="3" type="ordered locus">Rv0236A</name>
</gene>
<sequence length="57" mass="5834">MNRIVAPAAASVVVGLLLGAAAIFGVTLMVQQDKKPPLPGGDPSSSVLNRVEYGNRS</sequence>